<name>KAD_DEIDV</name>
<keyword id="KW-0067">ATP-binding</keyword>
<keyword id="KW-0963">Cytoplasm</keyword>
<keyword id="KW-0418">Kinase</keyword>
<keyword id="KW-0545">Nucleotide biosynthesis</keyword>
<keyword id="KW-0547">Nucleotide-binding</keyword>
<keyword id="KW-1185">Reference proteome</keyword>
<keyword id="KW-0808">Transferase</keyword>
<comment type="function">
    <text evidence="1">Catalyzes the reversible transfer of the terminal phosphate group between ATP and AMP. Plays an important role in cellular energy homeostasis and in adenine nucleotide metabolism.</text>
</comment>
<comment type="catalytic activity">
    <reaction evidence="1">
        <text>AMP + ATP = 2 ADP</text>
        <dbReference type="Rhea" id="RHEA:12973"/>
        <dbReference type="ChEBI" id="CHEBI:30616"/>
        <dbReference type="ChEBI" id="CHEBI:456215"/>
        <dbReference type="ChEBI" id="CHEBI:456216"/>
        <dbReference type="EC" id="2.7.4.3"/>
    </reaction>
</comment>
<comment type="pathway">
    <text evidence="1">Purine metabolism; AMP biosynthesis via salvage pathway; AMP from ADP: step 1/1.</text>
</comment>
<comment type="subunit">
    <text evidence="1">Monomer.</text>
</comment>
<comment type="subcellular location">
    <subcellularLocation>
        <location evidence="1">Cytoplasm</location>
    </subcellularLocation>
</comment>
<comment type="domain">
    <text evidence="1">Consists of three domains, a large central CORE domain and two small peripheral domains, NMPbind and LID, which undergo movements during catalysis. The LID domain closes over the site of phosphoryl transfer upon ATP binding. Assembling and dissambling the active center during each catalytic cycle provides an effective means to prevent ATP hydrolysis.</text>
</comment>
<comment type="similarity">
    <text evidence="1">Belongs to the adenylate kinase family.</text>
</comment>
<accession>C1CXE5</accession>
<dbReference type="EC" id="2.7.4.3" evidence="1"/>
<dbReference type="EMBL" id="CP001114">
    <property type="protein sequence ID" value="ACO46862.1"/>
    <property type="molecule type" value="Genomic_DNA"/>
</dbReference>
<dbReference type="RefSeq" id="WP_012693984.1">
    <property type="nucleotide sequence ID" value="NC_012526.1"/>
</dbReference>
<dbReference type="SMR" id="C1CXE5"/>
<dbReference type="STRING" id="546414.Deide_18740"/>
<dbReference type="PaxDb" id="546414-Deide_18740"/>
<dbReference type="KEGG" id="ddr:Deide_18740"/>
<dbReference type="eggNOG" id="COG0563">
    <property type="taxonomic scope" value="Bacteria"/>
</dbReference>
<dbReference type="HOGENOM" id="CLU_032354_4_1_0"/>
<dbReference type="OrthoDB" id="9805030at2"/>
<dbReference type="UniPathway" id="UPA00588">
    <property type="reaction ID" value="UER00649"/>
</dbReference>
<dbReference type="Proteomes" id="UP000002208">
    <property type="component" value="Chromosome"/>
</dbReference>
<dbReference type="GO" id="GO:0005737">
    <property type="term" value="C:cytoplasm"/>
    <property type="evidence" value="ECO:0007669"/>
    <property type="project" value="UniProtKB-SubCell"/>
</dbReference>
<dbReference type="GO" id="GO:0004017">
    <property type="term" value="F:adenylate kinase activity"/>
    <property type="evidence" value="ECO:0007669"/>
    <property type="project" value="UniProtKB-UniRule"/>
</dbReference>
<dbReference type="GO" id="GO:0005524">
    <property type="term" value="F:ATP binding"/>
    <property type="evidence" value="ECO:0007669"/>
    <property type="project" value="UniProtKB-UniRule"/>
</dbReference>
<dbReference type="GO" id="GO:0044209">
    <property type="term" value="P:AMP salvage"/>
    <property type="evidence" value="ECO:0007669"/>
    <property type="project" value="UniProtKB-UniRule"/>
</dbReference>
<dbReference type="CDD" id="cd01428">
    <property type="entry name" value="ADK"/>
    <property type="match status" value="1"/>
</dbReference>
<dbReference type="Gene3D" id="3.40.50.300">
    <property type="entry name" value="P-loop containing nucleotide triphosphate hydrolases"/>
    <property type="match status" value="1"/>
</dbReference>
<dbReference type="HAMAP" id="MF_00235">
    <property type="entry name" value="Adenylate_kinase_Adk"/>
    <property type="match status" value="1"/>
</dbReference>
<dbReference type="InterPro" id="IPR006259">
    <property type="entry name" value="Adenyl_kin_sub"/>
</dbReference>
<dbReference type="InterPro" id="IPR000850">
    <property type="entry name" value="Adenylat/UMP-CMP_kin"/>
</dbReference>
<dbReference type="InterPro" id="IPR033690">
    <property type="entry name" value="Adenylat_kinase_CS"/>
</dbReference>
<dbReference type="InterPro" id="IPR027417">
    <property type="entry name" value="P-loop_NTPase"/>
</dbReference>
<dbReference type="NCBIfam" id="TIGR01351">
    <property type="entry name" value="adk"/>
    <property type="match status" value="1"/>
</dbReference>
<dbReference type="NCBIfam" id="NF001381">
    <property type="entry name" value="PRK00279.1-3"/>
    <property type="match status" value="1"/>
</dbReference>
<dbReference type="NCBIfam" id="NF011100">
    <property type="entry name" value="PRK14527.1"/>
    <property type="match status" value="1"/>
</dbReference>
<dbReference type="NCBIfam" id="NF011104">
    <property type="entry name" value="PRK14531.1"/>
    <property type="match status" value="1"/>
</dbReference>
<dbReference type="NCBIfam" id="NF011105">
    <property type="entry name" value="PRK14532.1"/>
    <property type="match status" value="1"/>
</dbReference>
<dbReference type="PANTHER" id="PTHR23359">
    <property type="entry name" value="NUCLEOTIDE KINASE"/>
    <property type="match status" value="1"/>
</dbReference>
<dbReference type="Pfam" id="PF00406">
    <property type="entry name" value="ADK"/>
    <property type="match status" value="1"/>
</dbReference>
<dbReference type="PRINTS" id="PR00094">
    <property type="entry name" value="ADENYLTKNASE"/>
</dbReference>
<dbReference type="SUPFAM" id="SSF52540">
    <property type="entry name" value="P-loop containing nucleoside triphosphate hydrolases"/>
    <property type="match status" value="1"/>
</dbReference>
<dbReference type="PROSITE" id="PS00113">
    <property type="entry name" value="ADENYLATE_KINASE"/>
    <property type="match status" value="1"/>
</dbReference>
<reference key="1">
    <citation type="journal article" date="2009" name="PLoS Genet.">
        <title>Alliance of proteomics and genomics to unravel the specificities of Sahara bacterium Deinococcus deserti.</title>
        <authorList>
            <person name="de Groot A."/>
            <person name="Dulermo R."/>
            <person name="Ortet P."/>
            <person name="Blanchard L."/>
            <person name="Guerin P."/>
            <person name="Fernandez B."/>
            <person name="Vacherie B."/>
            <person name="Dossat C."/>
            <person name="Jolivet E."/>
            <person name="Siguier P."/>
            <person name="Chandler M."/>
            <person name="Barakat M."/>
            <person name="Dedieu A."/>
            <person name="Barbe V."/>
            <person name="Heulin T."/>
            <person name="Sommer S."/>
            <person name="Achouak W."/>
            <person name="Armengaud J."/>
        </authorList>
    </citation>
    <scope>NUCLEOTIDE SEQUENCE [LARGE SCALE GENOMIC DNA]</scope>
    <source>
        <strain>DSM 17065 / CIP 109153 / LMG 22923 / VCD115</strain>
    </source>
</reference>
<protein>
    <recommendedName>
        <fullName evidence="1">Adenylate kinase</fullName>
        <shortName evidence="1">AK</shortName>
        <ecNumber evidence="1">2.7.4.3</ecNumber>
    </recommendedName>
    <alternativeName>
        <fullName evidence="1">ATP-AMP transphosphorylase</fullName>
    </alternativeName>
    <alternativeName>
        <fullName evidence="1">ATP:AMP phosphotransferase</fullName>
    </alternativeName>
    <alternativeName>
        <fullName evidence="1">Adenylate monophosphate kinase</fullName>
    </alternativeName>
</protein>
<organism>
    <name type="scientific">Deinococcus deserti (strain DSM 17065 / CIP 109153 / LMG 22923 / VCD115)</name>
    <dbReference type="NCBI Taxonomy" id="546414"/>
    <lineage>
        <taxon>Bacteria</taxon>
        <taxon>Thermotogati</taxon>
        <taxon>Deinococcota</taxon>
        <taxon>Deinococci</taxon>
        <taxon>Deinococcales</taxon>
        <taxon>Deinococcaceae</taxon>
        <taxon>Deinococcus</taxon>
    </lineage>
</organism>
<gene>
    <name evidence="1" type="primary">adk</name>
    <name type="ordered locus">Deide_18740</name>
</gene>
<feature type="chain" id="PRO_1000204404" description="Adenylate kinase">
    <location>
        <begin position="1"/>
        <end position="197"/>
    </location>
</feature>
<feature type="region of interest" description="NMP" evidence="1">
    <location>
        <begin position="36"/>
        <end position="65"/>
    </location>
</feature>
<feature type="region of interest" description="LID" evidence="1">
    <location>
        <begin position="131"/>
        <end position="147"/>
    </location>
</feature>
<feature type="binding site" evidence="1">
    <location>
        <begin position="16"/>
        <end position="21"/>
    </location>
    <ligand>
        <name>ATP</name>
        <dbReference type="ChEBI" id="CHEBI:30616"/>
    </ligand>
</feature>
<feature type="binding site" evidence="1">
    <location>
        <position position="37"/>
    </location>
    <ligand>
        <name>AMP</name>
        <dbReference type="ChEBI" id="CHEBI:456215"/>
    </ligand>
</feature>
<feature type="binding site" evidence="1">
    <location>
        <position position="42"/>
    </location>
    <ligand>
        <name>AMP</name>
        <dbReference type="ChEBI" id="CHEBI:456215"/>
    </ligand>
</feature>
<feature type="binding site" evidence="1">
    <location>
        <begin position="63"/>
        <end position="65"/>
    </location>
    <ligand>
        <name>AMP</name>
        <dbReference type="ChEBI" id="CHEBI:456215"/>
    </ligand>
</feature>
<feature type="binding site" evidence="1">
    <location>
        <begin position="90"/>
        <end position="93"/>
    </location>
    <ligand>
        <name>AMP</name>
        <dbReference type="ChEBI" id="CHEBI:456215"/>
    </ligand>
</feature>
<feature type="binding site" evidence="1">
    <location>
        <position position="97"/>
    </location>
    <ligand>
        <name>AMP</name>
        <dbReference type="ChEBI" id="CHEBI:456215"/>
    </ligand>
</feature>
<feature type="binding site" evidence="1">
    <location>
        <position position="132"/>
    </location>
    <ligand>
        <name>ATP</name>
        <dbReference type="ChEBI" id="CHEBI:30616"/>
    </ligand>
</feature>
<feature type="binding site" evidence="1">
    <location>
        <position position="144"/>
    </location>
    <ligand>
        <name>AMP</name>
        <dbReference type="ChEBI" id="CHEBI:456215"/>
    </ligand>
</feature>
<feature type="binding site" evidence="1">
    <location>
        <position position="155"/>
    </location>
    <ligand>
        <name>AMP</name>
        <dbReference type="ChEBI" id="CHEBI:456215"/>
    </ligand>
</feature>
<feature type="binding site" evidence="1">
    <location>
        <position position="183"/>
    </location>
    <ligand>
        <name>ATP</name>
        <dbReference type="ChEBI" id="CHEBI:30616"/>
    </ligand>
</feature>
<evidence type="ECO:0000255" key="1">
    <source>
        <dbReference type="HAMAP-Rule" id="MF_00235"/>
    </source>
</evidence>
<proteinExistence type="inferred from homology"/>
<sequence length="197" mass="21623">MTQTENKVVIFLGPPGAGKGTQAERLAQEQSLTKISTGDILRDHVARGTELGQQVKPILDAGHLVPDEILIALIRDKLAGMRPVRVIFDGFPRTGAQAEALDALLEDLGAPVTAVPLLEVPDQVLIDRIVERGNQAQARGEAVRSDDNEETARRRQQVYREQTQPLIDYYAGRGQLYTVNGVGSLDEVYDRILKGMQ</sequence>